<protein>
    <recommendedName>
        <fullName evidence="5">Photosynthetic NDH subunit of subcomplex B 4, chloroplastic</fullName>
        <shortName evidence="5">Protein PnsB4</shortName>
    </recommendedName>
    <alternativeName>
        <fullName evidence="4">NDH DEPENDENT FLOW 6</fullName>
    </alternativeName>
    <alternativeName>
        <fullName evidence="6">NDH-DEPENDENT CYCLIC ELECTRON FLOW 6</fullName>
    </alternativeName>
</protein>
<accession>Q8RXS1</accession>
<accession>Q9M9U4</accession>
<keyword id="KW-0025">Alternative splicing</keyword>
<keyword id="KW-0150">Chloroplast</keyword>
<keyword id="KW-0472">Membrane</keyword>
<keyword id="KW-0934">Plastid</keyword>
<keyword id="KW-1185">Reference proteome</keyword>
<keyword id="KW-0793">Thylakoid</keyword>
<keyword id="KW-0809">Transit peptide</keyword>
<keyword id="KW-0812">Transmembrane</keyword>
<keyword id="KW-1133">Transmembrane helix</keyword>
<keyword id="KW-0813">Transport</keyword>
<dbReference type="EMBL" id="AC011809">
    <property type="protein sequence ID" value="AAF27106.1"/>
    <property type="status" value="ALT_SEQ"/>
    <property type="molecule type" value="Genomic_DNA"/>
</dbReference>
<dbReference type="EMBL" id="CP002684">
    <property type="protein sequence ID" value="AEE29753.1"/>
    <property type="molecule type" value="Genomic_DNA"/>
</dbReference>
<dbReference type="EMBL" id="AY117165">
    <property type="protein sequence ID" value="AAM51240.1"/>
    <property type="molecule type" value="mRNA"/>
</dbReference>
<dbReference type="EMBL" id="AK226496">
    <property type="protein sequence ID" value="BAE98638.1"/>
    <property type="molecule type" value="mRNA"/>
</dbReference>
<dbReference type="EMBL" id="AY080701">
    <property type="protein sequence ID" value="AAL85020.1"/>
    <property type="molecule type" value="mRNA"/>
</dbReference>
<dbReference type="PIR" id="B86321">
    <property type="entry name" value="B86321"/>
</dbReference>
<dbReference type="RefSeq" id="NP_173308.2">
    <molecule id="Q8RXS1-1"/>
    <property type="nucleotide sequence ID" value="NM_101731.5"/>
</dbReference>
<dbReference type="SMR" id="Q8RXS1"/>
<dbReference type="FunCoup" id="Q8RXS1">
    <property type="interactions" value="1652"/>
</dbReference>
<dbReference type="IntAct" id="Q8RXS1">
    <property type="interactions" value="15"/>
</dbReference>
<dbReference type="STRING" id="3702.Q8RXS1"/>
<dbReference type="PaxDb" id="3702-AT1G18730.1"/>
<dbReference type="EnsemblPlants" id="AT1G18730.1">
    <molecule id="Q8RXS1-1"/>
    <property type="protein sequence ID" value="AT1G18730.1"/>
    <property type="gene ID" value="AT1G18730"/>
</dbReference>
<dbReference type="GeneID" id="838455"/>
<dbReference type="Gramene" id="AT1G18730.1">
    <molecule id="Q8RXS1-1"/>
    <property type="protein sequence ID" value="AT1G18730.1"/>
    <property type="gene ID" value="AT1G18730"/>
</dbReference>
<dbReference type="KEGG" id="ath:AT1G18730"/>
<dbReference type="Araport" id="AT1G18730"/>
<dbReference type="TAIR" id="AT1G18730">
    <property type="gene designation" value="PNSB4"/>
</dbReference>
<dbReference type="eggNOG" id="ENOG502RXY2">
    <property type="taxonomic scope" value="Eukaryota"/>
</dbReference>
<dbReference type="InParanoid" id="Q8RXS1"/>
<dbReference type="PhylomeDB" id="Q8RXS1"/>
<dbReference type="PRO" id="PR:Q8RXS1"/>
<dbReference type="Proteomes" id="UP000006548">
    <property type="component" value="Chromosome 1"/>
</dbReference>
<dbReference type="ExpressionAtlas" id="Q8RXS1">
    <property type="expression patterns" value="baseline and differential"/>
</dbReference>
<dbReference type="GO" id="GO:0009535">
    <property type="term" value="C:chloroplast thylakoid membrane"/>
    <property type="evidence" value="ECO:0000314"/>
    <property type="project" value="UniProtKB"/>
</dbReference>
<dbReference type="GO" id="GO:0010598">
    <property type="term" value="C:NAD(P)H dehydrogenase complex (plastoquinone)"/>
    <property type="evidence" value="ECO:0000315"/>
    <property type="project" value="UniProtKB"/>
</dbReference>
<dbReference type="GO" id="GO:0009773">
    <property type="term" value="P:photosynthetic electron transport in photosystem I"/>
    <property type="evidence" value="ECO:0000304"/>
    <property type="project" value="TAIR"/>
</dbReference>
<dbReference type="InterPro" id="IPR034570">
    <property type="entry name" value="PNSB4"/>
</dbReference>
<dbReference type="PANTHER" id="PTHR36315">
    <property type="entry name" value="PHOTOSYNTHETIC NDH SUBUNIT OF SUBCOMPLEX B 4, CHLOROPLASTIC"/>
    <property type="match status" value="1"/>
</dbReference>
<dbReference type="PANTHER" id="PTHR36315:SF2">
    <property type="entry name" value="PHOTOSYNTHETIC NDH SUBUNIT OF SUBCOMPLEX B 4, CHLOROPLASTIC"/>
    <property type="match status" value="1"/>
</dbReference>
<gene>
    <name evidence="5" type="primary">PNSB4</name>
    <name evidence="4" type="synonym">NDF6</name>
    <name evidence="7" type="ordered locus">At1g18730</name>
    <name evidence="8" type="ORF">F6A14.16</name>
</gene>
<organism>
    <name type="scientific">Arabidopsis thaliana</name>
    <name type="common">Mouse-ear cress</name>
    <dbReference type="NCBI Taxonomy" id="3702"/>
    <lineage>
        <taxon>Eukaryota</taxon>
        <taxon>Viridiplantae</taxon>
        <taxon>Streptophyta</taxon>
        <taxon>Embryophyta</taxon>
        <taxon>Tracheophyta</taxon>
        <taxon>Spermatophyta</taxon>
        <taxon>Magnoliopsida</taxon>
        <taxon>eudicotyledons</taxon>
        <taxon>Gunneridae</taxon>
        <taxon>Pentapetalae</taxon>
        <taxon>rosids</taxon>
        <taxon>malvids</taxon>
        <taxon>Brassicales</taxon>
        <taxon>Brassicaceae</taxon>
        <taxon>Camelineae</taxon>
        <taxon>Arabidopsis</taxon>
    </lineage>
</organism>
<evidence type="ECO:0000255" key="1"/>
<evidence type="ECO:0000269" key="2">
    <source>
    </source>
</evidence>
<evidence type="ECO:0000269" key="3">
    <source>
    </source>
</evidence>
<evidence type="ECO:0000303" key="4">
    <source>
    </source>
</evidence>
<evidence type="ECO:0000303" key="5">
    <source>
    </source>
</evidence>
<evidence type="ECO:0000305" key="6"/>
<evidence type="ECO:0000312" key="7">
    <source>
        <dbReference type="Araport" id="AT1G18730"/>
    </source>
</evidence>
<evidence type="ECO:0000312" key="8">
    <source>
        <dbReference type="EMBL" id="AAF27106.1"/>
    </source>
</evidence>
<comment type="function">
    <text evidence="6">NDH shuttles electrons from NAD(P)H:plastoquinone, via FMN and iron-sulfur (Fe-S) centers, to quinones in the photosynthetic chain and possibly in a chloroplast respiratory chain. The immediate electron acceptor for the enzyme in this species is believed to be plastoquinone. Couples the redox reaction to proton translocation, and thus conserves the redox energy in a proton gradient.</text>
</comment>
<comment type="subunit">
    <text evidence="2 3">Part of the chloroplast NDH complex, composed of a mixture of chloroplast and nucleus encoded subunits. Component of the NDH subcomplex B, at least composed of PnsB1, PnsB2, PnsB3, PnsB4 and PnsB5.</text>
</comment>
<comment type="subcellular location">
    <subcellularLocation>
        <location evidence="2">Plastid</location>
        <location evidence="2">Chloroplast thylakoid membrane</location>
        <topology evidence="1">Single-pass membrane protein</topology>
    </subcellularLocation>
</comment>
<comment type="alternative products">
    <event type="alternative splicing"/>
    <isoform>
        <id>Q8RXS1-1</id>
        <name>1</name>
        <sequence type="displayed"/>
    </isoform>
    <text>A number of isoforms are produced. According to EST sequences.</text>
</comment>
<comment type="disruption phenotype">
    <text evidence="2">Malfunction of the NDH complex.</text>
</comment>
<comment type="sequence caution" evidence="6">
    <conflict type="erroneous gene model prediction">
        <sequence resource="EMBL-CDS" id="AAF27106"/>
    </conflict>
</comment>
<reference key="1">
    <citation type="journal article" date="2000" name="Nature">
        <title>Sequence and analysis of chromosome 1 of the plant Arabidopsis thaliana.</title>
        <authorList>
            <person name="Theologis A."/>
            <person name="Ecker J.R."/>
            <person name="Palm C.J."/>
            <person name="Federspiel N.A."/>
            <person name="Kaul S."/>
            <person name="White O."/>
            <person name="Alonso J."/>
            <person name="Altafi H."/>
            <person name="Araujo R."/>
            <person name="Bowman C.L."/>
            <person name="Brooks S.Y."/>
            <person name="Buehler E."/>
            <person name="Chan A."/>
            <person name="Chao Q."/>
            <person name="Chen H."/>
            <person name="Cheuk R.F."/>
            <person name="Chin C.W."/>
            <person name="Chung M.K."/>
            <person name="Conn L."/>
            <person name="Conway A.B."/>
            <person name="Conway A.R."/>
            <person name="Creasy T.H."/>
            <person name="Dewar K."/>
            <person name="Dunn P."/>
            <person name="Etgu P."/>
            <person name="Feldblyum T.V."/>
            <person name="Feng J.-D."/>
            <person name="Fong B."/>
            <person name="Fujii C.Y."/>
            <person name="Gill J.E."/>
            <person name="Goldsmith A.D."/>
            <person name="Haas B."/>
            <person name="Hansen N.F."/>
            <person name="Hughes B."/>
            <person name="Huizar L."/>
            <person name="Hunter J.L."/>
            <person name="Jenkins J."/>
            <person name="Johnson-Hopson C."/>
            <person name="Khan S."/>
            <person name="Khaykin E."/>
            <person name="Kim C.J."/>
            <person name="Koo H.L."/>
            <person name="Kremenetskaia I."/>
            <person name="Kurtz D.B."/>
            <person name="Kwan A."/>
            <person name="Lam B."/>
            <person name="Langin-Hooper S."/>
            <person name="Lee A."/>
            <person name="Lee J.M."/>
            <person name="Lenz C.A."/>
            <person name="Li J.H."/>
            <person name="Li Y.-P."/>
            <person name="Lin X."/>
            <person name="Liu S.X."/>
            <person name="Liu Z.A."/>
            <person name="Luros J.S."/>
            <person name="Maiti R."/>
            <person name="Marziali A."/>
            <person name="Militscher J."/>
            <person name="Miranda M."/>
            <person name="Nguyen M."/>
            <person name="Nierman W.C."/>
            <person name="Osborne B.I."/>
            <person name="Pai G."/>
            <person name="Peterson J."/>
            <person name="Pham P.K."/>
            <person name="Rizzo M."/>
            <person name="Rooney T."/>
            <person name="Rowley D."/>
            <person name="Sakano H."/>
            <person name="Salzberg S.L."/>
            <person name="Schwartz J.R."/>
            <person name="Shinn P."/>
            <person name="Southwick A.M."/>
            <person name="Sun H."/>
            <person name="Tallon L.J."/>
            <person name="Tambunga G."/>
            <person name="Toriumi M.J."/>
            <person name="Town C.D."/>
            <person name="Utterback T."/>
            <person name="Van Aken S."/>
            <person name="Vaysberg M."/>
            <person name="Vysotskaia V.S."/>
            <person name="Walker M."/>
            <person name="Wu D."/>
            <person name="Yu G."/>
            <person name="Fraser C.M."/>
            <person name="Venter J.C."/>
            <person name="Davis R.W."/>
        </authorList>
    </citation>
    <scope>NUCLEOTIDE SEQUENCE [LARGE SCALE GENOMIC DNA]</scope>
    <source>
        <strain>cv. Columbia</strain>
    </source>
</reference>
<reference key="2">
    <citation type="journal article" date="2017" name="Plant J.">
        <title>Araport11: a complete reannotation of the Arabidopsis thaliana reference genome.</title>
        <authorList>
            <person name="Cheng C.Y."/>
            <person name="Krishnakumar V."/>
            <person name="Chan A.P."/>
            <person name="Thibaud-Nissen F."/>
            <person name="Schobel S."/>
            <person name="Town C.D."/>
        </authorList>
    </citation>
    <scope>GENOME REANNOTATION</scope>
    <source>
        <strain>cv. Columbia</strain>
    </source>
</reference>
<reference key="3">
    <citation type="journal article" date="2003" name="Science">
        <title>Empirical analysis of transcriptional activity in the Arabidopsis genome.</title>
        <authorList>
            <person name="Yamada K."/>
            <person name="Lim J."/>
            <person name="Dale J.M."/>
            <person name="Chen H."/>
            <person name="Shinn P."/>
            <person name="Palm C.J."/>
            <person name="Southwick A.M."/>
            <person name="Wu H.C."/>
            <person name="Kim C.J."/>
            <person name="Nguyen M."/>
            <person name="Pham P.K."/>
            <person name="Cheuk R.F."/>
            <person name="Karlin-Newmann G."/>
            <person name="Liu S.X."/>
            <person name="Lam B."/>
            <person name="Sakano H."/>
            <person name="Wu T."/>
            <person name="Yu G."/>
            <person name="Miranda M."/>
            <person name="Quach H.L."/>
            <person name="Tripp M."/>
            <person name="Chang C.H."/>
            <person name="Lee J.M."/>
            <person name="Toriumi M.J."/>
            <person name="Chan M.M."/>
            <person name="Tang C.C."/>
            <person name="Onodera C.S."/>
            <person name="Deng J.M."/>
            <person name="Akiyama K."/>
            <person name="Ansari Y."/>
            <person name="Arakawa T."/>
            <person name="Banh J."/>
            <person name="Banno F."/>
            <person name="Bowser L."/>
            <person name="Brooks S.Y."/>
            <person name="Carninci P."/>
            <person name="Chao Q."/>
            <person name="Choy N."/>
            <person name="Enju A."/>
            <person name="Goldsmith A.D."/>
            <person name="Gurjal M."/>
            <person name="Hansen N.F."/>
            <person name="Hayashizaki Y."/>
            <person name="Johnson-Hopson C."/>
            <person name="Hsuan V.W."/>
            <person name="Iida K."/>
            <person name="Karnes M."/>
            <person name="Khan S."/>
            <person name="Koesema E."/>
            <person name="Ishida J."/>
            <person name="Jiang P.X."/>
            <person name="Jones T."/>
            <person name="Kawai J."/>
            <person name="Kamiya A."/>
            <person name="Meyers C."/>
            <person name="Nakajima M."/>
            <person name="Narusaka M."/>
            <person name="Seki M."/>
            <person name="Sakurai T."/>
            <person name="Satou M."/>
            <person name="Tamse R."/>
            <person name="Vaysberg M."/>
            <person name="Wallender E.K."/>
            <person name="Wong C."/>
            <person name="Yamamura Y."/>
            <person name="Yuan S."/>
            <person name="Shinozaki K."/>
            <person name="Davis R.W."/>
            <person name="Theologis A."/>
            <person name="Ecker J.R."/>
        </authorList>
    </citation>
    <scope>NUCLEOTIDE SEQUENCE [LARGE SCALE MRNA]</scope>
    <source>
        <strain>cv. Columbia</strain>
    </source>
</reference>
<reference key="4">
    <citation type="submission" date="2006-07" db="EMBL/GenBank/DDBJ databases">
        <title>Large-scale analysis of RIKEN Arabidopsis full-length (RAFL) cDNAs.</title>
        <authorList>
            <person name="Totoki Y."/>
            <person name="Seki M."/>
            <person name="Ishida J."/>
            <person name="Nakajima M."/>
            <person name="Enju A."/>
            <person name="Kamiya A."/>
            <person name="Narusaka M."/>
            <person name="Shin-i T."/>
            <person name="Nakagawa M."/>
            <person name="Sakamoto N."/>
            <person name="Oishi K."/>
            <person name="Kohara Y."/>
            <person name="Kobayashi M."/>
            <person name="Toyoda A."/>
            <person name="Sakaki Y."/>
            <person name="Sakurai T."/>
            <person name="Iida K."/>
            <person name="Akiyama K."/>
            <person name="Satou M."/>
            <person name="Toyoda T."/>
            <person name="Konagaya A."/>
            <person name="Carninci P."/>
            <person name="Kawai J."/>
            <person name="Hayashizaki Y."/>
            <person name="Shinozaki K."/>
        </authorList>
    </citation>
    <scope>NUCLEOTIDE SEQUENCE [LARGE SCALE MRNA]</scope>
    <source>
        <strain>cv. Columbia</strain>
    </source>
</reference>
<reference key="5">
    <citation type="journal article" date="2008" name="Plant Cell Physiol.">
        <title>NDF6: a thylakoid protein specific to terrestrial plants is essential for activity of chloroplastic NAD(P)H dehydrogenase in Arabidopsis.</title>
        <authorList>
            <person name="Ishikawa N."/>
            <person name="Takabayashi A."/>
            <person name="Ishida S."/>
            <person name="Hano Y."/>
            <person name="Endo T."/>
            <person name="Sato F."/>
        </authorList>
    </citation>
    <scope>COMPONENT OF THE NDH COMPLEX</scope>
    <scope>SUBCELLULAR LOCATION</scope>
    <scope>DISRUPTION PHENOTYPE</scope>
</reference>
<reference key="6">
    <citation type="journal article" date="2009" name="Mol. Plant">
        <title>Towards characterization of the chloroplast NAD(P)H dehydrogenase complex.</title>
        <authorList>
            <person name="Suorsa M."/>
            <person name="Sirpioe S."/>
            <person name="Aro E.M."/>
        </authorList>
    </citation>
    <scope>REVIEW</scope>
</reference>
<reference key="7">
    <citation type="journal article" date="2011" name="Biochim. Biophys. Acta">
        <title>Structure and biogenesis of the chloroplast NAD(P)H dehydrogenase complex.</title>
        <authorList>
            <person name="Peng L."/>
            <person name="Yamamoto H."/>
            <person name="Shikanai T."/>
        </authorList>
    </citation>
    <scope>REVIEW</scope>
</reference>
<reference key="8">
    <citation type="journal article" date="2011" name="Plant Cell Physiol.">
        <title>Structure of the chloroplast NADH dehydrogenase-like complex: nomenclature for nuclear-encoded subunits.</title>
        <authorList>
            <person name="Ifuku K."/>
            <person name="Endo T."/>
            <person name="Shikanai T."/>
            <person name="Aro E.M."/>
        </authorList>
    </citation>
    <scope>NOMENCLATURE</scope>
    <scope>COMPONENT OF THE NDH COMPLEX</scope>
</reference>
<proteinExistence type="evidence at transcript level"/>
<sequence>MAEAFTSFTFTNLHIPSSYNHSPKQNSGPNHGYWLSKNVNEKRERNLMRGSLCVRKALPHDLPLMAVMVQQIEGMRDIITEKHVWHLSDKAIKNVYMFYIMFTCWGCLYFGSAKDPFYDSEEYRGDGGDGTGYWVYETQEDIEEKARAELWREELIEEIEQKVGGLRELEEAVTK</sequence>
<name>PNSB4_ARATH</name>
<feature type="transit peptide" description="Chloroplast" evidence="1">
    <location>
        <begin position="1"/>
        <end position="24"/>
    </location>
</feature>
<feature type="chain" id="PRO_0000431822" description="Photosynthetic NDH subunit of subcomplex B 4, chloroplastic">
    <location>
        <begin position="25"/>
        <end position="175"/>
    </location>
</feature>
<feature type="transmembrane region" description="Helical" evidence="1">
    <location>
        <begin position="95"/>
        <end position="111"/>
    </location>
</feature>